<feature type="chain" id="PRO_0000285148" description="ATP-dependent RNA helicase SUB2">
    <location>
        <begin position="1"/>
        <end position="433"/>
    </location>
</feature>
<feature type="domain" description="Helicase ATP-binding" evidence="2">
    <location>
        <begin position="80"/>
        <end position="255"/>
    </location>
</feature>
<feature type="domain" description="Helicase C-terminal" evidence="3">
    <location>
        <begin position="267"/>
        <end position="428"/>
    </location>
</feature>
<feature type="short sequence motif" description="Q motif">
    <location>
        <begin position="49"/>
        <end position="77"/>
    </location>
</feature>
<feature type="short sequence motif" description="DEAD box">
    <location>
        <begin position="202"/>
        <end position="205"/>
    </location>
</feature>
<feature type="binding site" evidence="2">
    <location>
        <begin position="93"/>
        <end position="100"/>
    </location>
    <ligand>
        <name>ATP</name>
        <dbReference type="ChEBI" id="CHEBI:30616"/>
    </ligand>
</feature>
<sequence>MSHEGQEELLDYSDSEEIAVPTTTEVAGADSATDKEADKKGSYVGIHATGFRDFLLKPELLRAIGDCGFEHPSEVQQVCIPQSILGTDVLCQAKSGLGKTAVFVLSTLQQLDPVPGEISTLVICHTRELAYQIRNEYARFSKYMPDVKTEVFYGGTPIKRDIEKLKSKDTCPHIVVATPGRLHALVNEKAIRLSNVKSFVIDECDKVLESIDMRRDVQDIFRATPHQKQVMMFSATLSQEIRPVCKKFMQNPLEIYVDDEAKLTLHGLQQYYIKLEEKEKNRKLSDLLDSLEFNQVIIFVKSTQRANELNKLLCSCNFPSIAVHSGLPQEERIERYRSFKEFNKRICVSTDVFGRGIDIERINLAINYDLPNEADQYLHRVGRAGRFGTKGLAISLVGSKEDEEVLEKIQSRFDVKITEFPEEGVDPSTYMNT</sequence>
<accession>A3LST5</accession>
<keyword id="KW-0067">ATP-binding</keyword>
<keyword id="KW-0347">Helicase</keyword>
<keyword id="KW-0378">Hydrolase</keyword>
<keyword id="KW-0507">mRNA processing</keyword>
<keyword id="KW-0508">mRNA splicing</keyword>
<keyword id="KW-0509">mRNA transport</keyword>
<keyword id="KW-0547">Nucleotide-binding</keyword>
<keyword id="KW-0539">Nucleus</keyword>
<keyword id="KW-1185">Reference proteome</keyword>
<keyword id="KW-0694">RNA-binding</keyword>
<keyword id="KW-0747">Spliceosome</keyword>
<keyword id="KW-0813">Transport</keyword>
<evidence type="ECO:0000250" key="1"/>
<evidence type="ECO:0000255" key="2">
    <source>
        <dbReference type="PROSITE-ProRule" id="PRU00541"/>
    </source>
</evidence>
<evidence type="ECO:0000255" key="3">
    <source>
        <dbReference type="PROSITE-ProRule" id="PRU00542"/>
    </source>
</evidence>
<evidence type="ECO:0000305" key="4"/>
<organism>
    <name type="scientific">Scheffersomyces stipitis (strain ATCC 58785 / CBS 6054 / NBRC 10063 / NRRL Y-11545)</name>
    <name type="common">Yeast</name>
    <name type="synonym">Pichia stipitis</name>
    <dbReference type="NCBI Taxonomy" id="322104"/>
    <lineage>
        <taxon>Eukaryota</taxon>
        <taxon>Fungi</taxon>
        <taxon>Dikarya</taxon>
        <taxon>Ascomycota</taxon>
        <taxon>Saccharomycotina</taxon>
        <taxon>Pichiomycetes</taxon>
        <taxon>Debaryomycetaceae</taxon>
        <taxon>Scheffersomyces</taxon>
    </lineage>
</organism>
<proteinExistence type="inferred from homology"/>
<dbReference type="EC" id="3.6.4.13"/>
<dbReference type="EMBL" id="CP000498">
    <property type="protein sequence ID" value="ABN66290.1"/>
    <property type="molecule type" value="Genomic_DNA"/>
</dbReference>
<dbReference type="RefSeq" id="XP_001384319.1">
    <property type="nucleotide sequence ID" value="XM_001384282.1"/>
</dbReference>
<dbReference type="SMR" id="A3LST5"/>
<dbReference type="FunCoup" id="A3LST5">
    <property type="interactions" value="1305"/>
</dbReference>
<dbReference type="STRING" id="322104.A3LST5"/>
<dbReference type="GeneID" id="4838602"/>
<dbReference type="KEGG" id="pic:PICST_83587"/>
<dbReference type="eggNOG" id="KOG0329">
    <property type="taxonomic scope" value="Eukaryota"/>
</dbReference>
<dbReference type="HOGENOM" id="CLU_003041_1_0_1"/>
<dbReference type="InParanoid" id="A3LST5"/>
<dbReference type="OMA" id="YAHVEPK"/>
<dbReference type="OrthoDB" id="10265785at2759"/>
<dbReference type="Proteomes" id="UP000002258">
    <property type="component" value="Chromosome 4"/>
</dbReference>
<dbReference type="GO" id="GO:0000781">
    <property type="term" value="C:chromosome, telomeric region"/>
    <property type="evidence" value="ECO:0007669"/>
    <property type="project" value="EnsemblFungi"/>
</dbReference>
<dbReference type="GO" id="GO:0005681">
    <property type="term" value="C:spliceosomal complex"/>
    <property type="evidence" value="ECO:0007669"/>
    <property type="project" value="UniProtKB-KW"/>
</dbReference>
<dbReference type="GO" id="GO:0000346">
    <property type="term" value="C:transcription export complex"/>
    <property type="evidence" value="ECO:0007669"/>
    <property type="project" value="EnsemblFungi"/>
</dbReference>
<dbReference type="GO" id="GO:0005524">
    <property type="term" value="F:ATP binding"/>
    <property type="evidence" value="ECO:0007669"/>
    <property type="project" value="UniProtKB-KW"/>
</dbReference>
<dbReference type="GO" id="GO:0016887">
    <property type="term" value="F:ATP hydrolysis activity"/>
    <property type="evidence" value="ECO:0007669"/>
    <property type="project" value="RHEA"/>
</dbReference>
<dbReference type="GO" id="GO:0003723">
    <property type="term" value="F:RNA binding"/>
    <property type="evidence" value="ECO:0007669"/>
    <property type="project" value="UniProtKB-KW"/>
</dbReference>
<dbReference type="GO" id="GO:0003724">
    <property type="term" value="F:RNA helicase activity"/>
    <property type="evidence" value="ECO:0007669"/>
    <property type="project" value="UniProtKB-EC"/>
</dbReference>
<dbReference type="GO" id="GO:0031124">
    <property type="term" value="P:mRNA 3'-end processing"/>
    <property type="evidence" value="ECO:0007669"/>
    <property type="project" value="EnsemblFungi"/>
</dbReference>
<dbReference type="GO" id="GO:0006406">
    <property type="term" value="P:mRNA export from nucleus"/>
    <property type="evidence" value="ECO:0007669"/>
    <property type="project" value="EnsemblFungi"/>
</dbReference>
<dbReference type="GO" id="GO:0000398">
    <property type="term" value="P:mRNA splicing, via spliceosome"/>
    <property type="evidence" value="ECO:0007669"/>
    <property type="project" value="EnsemblFungi"/>
</dbReference>
<dbReference type="GO" id="GO:0031509">
    <property type="term" value="P:subtelomeric heterochromatin formation"/>
    <property type="evidence" value="ECO:0007669"/>
    <property type="project" value="EnsemblFungi"/>
</dbReference>
<dbReference type="GO" id="GO:0006368">
    <property type="term" value="P:transcription elongation by RNA polymerase II"/>
    <property type="evidence" value="ECO:0007669"/>
    <property type="project" value="EnsemblFungi"/>
</dbReference>
<dbReference type="GO" id="GO:0006283">
    <property type="term" value="P:transcription-coupled nucleotide-excision repair"/>
    <property type="evidence" value="ECO:0007669"/>
    <property type="project" value="EnsemblFungi"/>
</dbReference>
<dbReference type="CDD" id="cd17950">
    <property type="entry name" value="DEADc_DDX39"/>
    <property type="match status" value="1"/>
</dbReference>
<dbReference type="CDD" id="cd18787">
    <property type="entry name" value="SF2_C_DEAD"/>
    <property type="match status" value="1"/>
</dbReference>
<dbReference type="FunFam" id="3.40.50.300:FF:000809">
    <property type="entry name" value="ATP-dependent RNA helicase SUB2"/>
    <property type="match status" value="1"/>
</dbReference>
<dbReference type="FunFam" id="3.40.50.300:FF:000111">
    <property type="entry name" value="DEAD-box ATP-dependent RNA helicase"/>
    <property type="match status" value="1"/>
</dbReference>
<dbReference type="Gene3D" id="3.40.50.300">
    <property type="entry name" value="P-loop containing nucleotide triphosphate hydrolases"/>
    <property type="match status" value="2"/>
</dbReference>
<dbReference type="InterPro" id="IPR011545">
    <property type="entry name" value="DEAD/DEAH_box_helicase_dom"/>
</dbReference>
<dbReference type="InterPro" id="IPR014001">
    <property type="entry name" value="Helicase_ATP-bd"/>
</dbReference>
<dbReference type="InterPro" id="IPR001650">
    <property type="entry name" value="Helicase_C-like"/>
</dbReference>
<dbReference type="InterPro" id="IPR027417">
    <property type="entry name" value="P-loop_NTPase"/>
</dbReference>
<dbReference type="InterPro" id="IPR014014">
    <property type="entry name" value="RNA_helicase_DEAD_Q_motif"/>
</dbReference>
<dbReference type="PANTHER" id="PTHR47958">
    <property type="entry name" value="ATP-DEPENDENT RNA HELICASE DBP3"/>
    <property type="match status" value="1"/>
</dbReference>
<dbReference type="Pfam" id="PF00270">
    <property type="entry name" value="DEAD"/>
    <property type="match status" value="1"/>
</dbReference>
<dbReference type="Pfam" id="PF00271">
    <property type="entry name" value="Helicase_C"/>
    <property type="match status" value="1"/>
</dbReference>
<dbReference type="SMART" id="SM00487">
    <property type="entry name" value="DEXDc"/>
    <property type="match status" value="1"/>
</dbReference>
<dbReference type="SMART" id="SM00490">
    <property type="entry name" value="HELICc"/>
    <property type="match status" value="1"/>
</dbReference>
<dbReference type="SUPFAM" id="SSF52540">
    <property type="entry name" value="P-loop containing nucleoside triphosphate hydrolases"/>
    <property type="match status" value="1"/>
</dbReference>
<dbReference type="PROSITE" id="PS51192">
    <property type="entry name" value="HELICASE_ATP_BIND_1"/>
    <property type="match status" value="1"/>
</dbReference>
<dbReference type="PROSITE" id="PS51194">
    <property type="entry name" value="HELICASE_CTER"/>
    <property type="match status" value="1"/>
</dbReference>
<dbReference type="PROSITE" id="PS51195">
    <property type="entry name" value="Q_MOTIF"/>
    <property type="match status" value="1"/>
</dbReference>
<name>SUB2_PICST</name>
<reference key="1">
    <citation type="journal article" date="2007" name="Nat. Biotechnol.">
        <title>Genome sequence of the lignocellulose-bioconverting and xylose-fermenting yeast Pichia stipitis.</title>
        <authorList>
            <person name="Jeffries T.W."/>
            <person name="Grigoriev I.V."/>
            <person name="Grimwood J."/>
            <person name="Laplaza J.M."/>
            <person name="Aerts A."/>
            <person name="Salamov A."/>
            <person name="Schmutz J."/>
            <person name="Lindquist E."/>
            <person name="Dehal P."/>
            <person name="Shapiro H."/>
            <person name="Jin Y.-S."/>
            <person name="Passoth V."/>
            <person name="Richardson P.M."/>
        </authorList>
    </citation>
    <scope>NUCLEOTIDE SEQUENCE [LARGE SCALE GENOMIC DNA]</scope>
    <source>
        <strain>ATCC 58785 / CBS 6054 / NBRC 10063 / NRRL Y-11545</strain>
    </source>
</reference>
<comment type="function">
    <text evidence="1">ATP-binding RNA helicase involved in transcription elongation and required for the export of mRNA out of the nucleus. SUB2 also plays a role in pre-mRNA splicing and spliceosome assembly. May be involved in rDNA and telomeric silencing, and maintenance of genome integrity (By similarity).</text>
</comment>
<comment type="catalytic activity">
    <reaction>
        <text>ATP + H2O = ADP + phosphate + H(+)</text>
        <dbReference type="Rhea" id="RHEA:13065"/>
        <dbReference type="ChEBI" id="CHEBI:15377"/>
        <dbReference type="ChEBI" id="CHEBI:15378"/>
        <dbReference type="ChEBI" id="CHEBI:30616"/>
        <dbReference type="ChEBI" id="CHEBI:43474"/>
        <dbReference type="ChEBI" id="CHEBI:456216"/>
        <dbReference type="EC" id="3.6.4.13"/>
    </reaction>
</comment>
<comment type="subcellular location">
    <subcellularLocation>
        <location evidence="1">Nucleus</location>
    </subcellularLocation>
</comment>
<comment type="domain">
    <text>The Q motif is unique to and characteristic of the DEAD box family of RNA helicases and controls ATP binding and hydrolysis.</text>
</comment>
<comment type="similarity">
    <text evidence="4">Belongs to the DEAD box helicase family. DECD subfamily.</text>
</comment>
<protein>
    <recommendedName>
        <fullName>ATP-dependent RNA helicase SUB2</fullName>
        <ecNumber>3.6.4.13</ecNumber>
    </recommendedName>
</protein>
<gene>
    <name type="primary">SUB2</name>
    <name type="ORF">PICST_83587</name>
</gene>